<reference key="1">
    <citation type="journal article" date="2004" name="Science">
        <title>Illuminating the evolutionary history of chlamydiae.</title>
        <authorList>
            <person name="Horn M."/>
            <person name="Collingro A."/>
            <person name="Schmitz-Esser S."/>
            <person name="Beier C.L."/>
            <person name="Purkhold U."/>
            <person name="Fartmann B."/>
            <person name="Brandt P."/>
            <person name="Nyakatura G.J."/>
            <person name="Droege M."/>
            <person name="Frishman D."/>
            <person name="Rattei T."/>
            <person name="Mewes H.-W."/>
            <person name="Wagner M."/>
        </authorList>
    </citation>
    <scope>NUCLEOTIDE SEQUENCE [LARGE SCALE GENOMIC DNA]</scope>
    <source>
        <strain>UWE25</strain>
    </source>
</reference>
<evidence type="ECO:0000255" key="1">
    <source>
        <dbReference type="HAMAP-Rule" id="MF_00175"/>
    </source>
</evidence>
<evidence type="ECO:0000255" key="2">
    <source>
        <dbReference type="PROSITE-ProRule" id="PRU01250"/>
    </source>
</evidence>
<protein>
    <recommendedName>
        <fullName evidence="1">ATP-dependent Clp protease ATP-binding subunit ClpX</fullName>
    </recommendedName>
</protein>
<feature type="chain" id="PRO_0000160395" description="ATP-dependent Clp protease ATP-binding subunit ClpX">
    <location>
        <begin position="1"/>
        <end position="413"/>
    </location>
</feature>
<feature type="domain" description="ClpX-type ZB" evidence="2">
    <location>
        <begin position="1"/>
        <end position="54"/>
    </location>
</feature>
<feature type="binding site" evidence="2">
    <location>
        <position position="13"/>
    </location>
    <ligand>
        <name>Zn(2+)</name>
        <dbReference type="ChEBI" id="CHEBI:29105"/>
    </ligand>
</feature>
<feature type="binding site" evidence="2">
    <location>
        <position position="16"/>
    </location>
    <ligand>
        <name>Zn(2+)</name>
        <dbReference type="ChEBI" id="CHEBI:29105"/>
    </ligand>
</feature>
<feature type="binding site" evidence="2">
    <location>
        <position position="35"/>
    </location>
    <ligand>
        <name>Zn(2+)</name>
        <dbReference type="ChEBI" id="CHEBI:29105"/>
    </ligand>
</feature>
<feature type="binding site" evidence="2">
    <location>
        <position position="38"/>
    </location>
    <ligand>
        <name>Zn(2+)</name>
        <dbReference type="ChEBI" id="CHEBI:29105"/>
    </ligand>
</feature>
<feature type="binding site" evidence="1">
    <location>
        <begin position="115"/>
        <end position="122"/>
    </location>
    <ligand>
        <name>ATP</name>
        <dbReference type="ChEBI" id="CHEBI:30616"/>
    </ligand>
</feature>
<gene>
    <name evidence="1" type="primary">clpX</name>
    <name type="ordered locus">pc1377</name>
</gene>
<name>CLPX_PARUW</name>
<keyword id="KW-0067">ATP-binding</keyword>
<keyword id="KW-0143">Chaperone</keyword>
<keyword id="KW-0479">Metal-binding</keyword>
<keyword id="KW-0547">Nucleotide-binding</keyword>
<keyword id="KW-1185">Reference proteome</keyword>
<keyword id="KW-0862">Zinc</keyword>
<comment type="function">
    <text evidence="1">ATP-dependent specificity component of the Clp protease. It directs the protease to specific substrates. Can perform chaperone functions in the absence of ClpP.</text>
</comment>
<comment type="subunit">
    <text evidence="1">Component of the ClpX-ClpP complex. Forms a hexameric ring that, in the presence of ATP, binds to fourteen ClpP subunits assembled into a disk-like structure with a central cavity, resembling the structure of eukaryotic proteasomes.</text>
</comment>
<comment type="similarity">
    <text evidence="1">Belongs to the ClpX chaperone family.</text>
</comment>
<organism>
    <name type="scientific">Protochlamydia amoebophila (strain UWE25)</name>
    <dbReference type="NCBI Taxonomy" id="264201"/>
    <lineage>
        <taxon>Bacteria</taxon>
        <taxon>Pseudomonadati</taxon>
        <taxon>Chlamydiota</taxon>
        <taxon>Chlamydiia</taxon>
        <taxon>Parachlamydiales</taxon>
        <taxon>Parachlamydiaceae</taxon>
        <taxon>Candidatus Protochlamydia</taxon>
    </lineage>
</organism>
<proteinExistence type="inferred from homology"/>
<sequence>MSKKSLTKELASCSFCGRTEEAVEKLISGPNVYICDKCVRLCTGILDKKAPSTYEFKILKPKEIKEKLDEYIIGQENAKKTISVGVYNHYKRIRSKNKEADGIEFSKSNVLLFGPTGSGKTLIAKTLASILDVPFTIADATTLTEAGYVGEDVENIILRLLQAADYDVAKAEQGIIYIDEIDKINRTTANVSITRDVSGEGVQQALLKIVEGTIANVPPKGGRKHPNQEYIKVNTENILFIVGGAFVNLEKIIAKRLGRNTIGFDGSNREVVDPTQKSLLLSKVEPEDLIQFGMIPEFVGRFNSIANCNELQLPDLINILTEPKNAFIKQFIAMFEAEGVKLQFTEDALAAIAQQAIEAGTGARALRLILENLMRELMYEIPSDETISEILIEKETVTEKKPPIIKRHDQKIA</sequence>
<accession>Q6MBE8</accession>
<dbReference type="EMBL" id="BX908798">
    <property type="protein sequence ID" value="CAF24101.1"/>
    <property type="molecule type" value="Genomic_DNA"/>
</dbReference>
<dbReference type="RefSeq" id="WP_011175926.1">
    <property type="nucleotide sequence ID" value="NC_005861.2"/>
</dbReference>
<dbReference type="SMR" id="Q6MBE8"/>
<dbReference type="STRING" id="264201.pc1377"/>
<dbReference type="KEGG" id="pcu:PC_RS06620"/>
<dbReference type="eggNOG" id="COG1219">
    <property type="taxonomic scope" value="Bacteria"/>
</dbReference>
<dbReference type="HOGENOM" id="CLU_014218_8_2_0"/>
<dbReference type="OrthoDB" id="9804062at2"/>
<dbReference type="Proteomes" id="UP000000529">
    <property type="component" value="Chromosome"/>
</dbReference>
<dbReference type="GO" id="GO:0009376">
    <property type="term" value="C:HslUV protease complex"/>
    <property type="evidence" value="ECO:0007669"/>
    <property type="project" value="TreeGrafter"/>
</dbReference>
<dbReference type="GO" id="GO:0005524">
    <property type="term" value="F:ATP binding"/>
    <property type="evidence" value="ECO:0007669"/>
    <property type="project" value="UniProtKB-UniRule"/>
</dbReference>
<dbReference type="GO" id="GO:0016887">
    <property type="term" value="F:ATP hydrolysis activity"/>
    <property type="evidence" value="ECO:0007669"/>
    <property type="project" value="InterPro"/>
</dbReference>
<dbReference type="GO" id="GO:0140662">
    <property type="term" value="F:ATP-dependent protein folding chaperone"/>
    <property type="evidence" value="ECO:0007669"/>
    <property type="project" value="InterPro"/>
</dbReference>
<dbReference type="GO" id="GO:0046983">
    <property type="term" value="F:protein dimerization activity"/>
    <property type="evidence" value="ECO:0007669"/>
    <property type="project" value="InterPro"/>
</dbReference>
<dbReference type="GO" id="GO:0051082">
    <property type="term" value="F:unfolded protein binding"/>
    <property type="evidence" value="ECO:0007669"/>
    <property type="project" value="UniProtKB-UniRule"/>
</dbReference>
<dbReference type="GO" id="GO:0008270">
    <property type="term" value="F:zinc ion binding"/>
    <property type="evidence" value="ECO:0007669"/>
    <property type="project" value="InterPro"/>
</dbReference>
<dbReference type="GO" id="GO:0051301">
    <property type="term" value="P:cell division"/>
    <property type="evidence" value="ECO:0007669"/>
    <property type="project" value="TreeGrafter"/>
</dbReference>
<dbReference type="GO" id="GO:0051603">
    <property type="term" value="P:proteolysis involved in protein catabolic process"/>
    <property type="evidence" value="ECO:0007669"/>
    <property type="project" value="TreeGrafter"/>
</dbReference>
<dbReference type="CDD" id="cd19497">
    <property type="entry name" value="RecA-like_ClpX"/>
    <property type="match status" value="1"/>
</dbReference>
<dbReference type="FunFam" id="1.10.8.60:FF:000002">
    <property type="entry name" value="ATP-dependent Clp protease ATP-binding subunit ClpX"/>
    <property type="match status" value="1"/>
</dbReference>
<dbReference type="FunFam" id="3.40.50.300:FF:000005">
    <property type="entry name" value="ATP-dependent Clp protease ATP-binding subunit ClpX"/>
    <property type="match status" value="1"/>
</dbReference>
<dbReference type="Gene3D" id="1.10.8.60">
    <property type="match status" value="1"/>
</dbReference>
<dbReference type="Gene3D" id="6.20.220.10">
    <property type="entry name" value="ClpX chaperone, C4-type zinc finger domain"/>
    <property type="match status" value="1"/>
</dbReference>
<dbReference type="Gene3D" id="3.40.50.300">
    <property type="entry name" value="P-loop containing nucleotide triphosphate hydrolases"/>
    <property type="match status" value="1"/>
</dbReference>
<dbReference type="HAMAP" id="MF_00175">
    <property type="entry name" value="ClpX"/>
    <property type="match status" value="1"/>
</dbReference>
<dbReference type="InterPro" id="IPR003593">
    <property type="entry name" value="AAA+_ATPase"/>
</dbReference>
<dbReference type="InterPro" id="IPR050052">
    <property type="entry name" value="ATP-dep_Clp_protease_ClpX"/>
</dbReference>
<dbReference type="InterPro" id="IPR003959">
    <property type="entry name" value="ATPase_AAA_core"/>
</dbReference>
<dbReference type="InterPro" id="IPR019489">
    <property type="entry name" value="Clp_ATPase_C"/>
</dbReference>
<dbReference type="InterPro" id="IPR004487">
    <property type="entry name" value="Clp_protease_ATP-bd_su_ClpX"/>
</dbReference>
<dbReference type="InterPro" id="IPR046425">
    <property type="entry name" value="ClpX_bact"/>
</dbReference>
<dbReference type="InterPro" id="IPR027417">
    <property type="entry name" value="P-loop_NTPase"/>
</dbReference>
<dbReference type="InterPro" id="IPR010603">
    <property type="entry name" value="Znf_CppX_C4"/>
</dbReference>
<dbReference type="InterPro" id="IPR038366">
    <property type="entry name" value="Znf_CppX_C4_sf"/>
</dbReference>
<dbReference type="NCBIfam" id="TIGR00382">
    <property type="entry name" value="clpX"/>
    <property type="match status" value="1"/>
</dbReference>
<dbReference type="NCBIfam" id="NF003745">
    <property type="entry name" value="PRK05342.1"/>
    <property type="match status" value="1"/>
</dbReference>
<dbReference type="PANTHER" id="PTHR48102:SF7">
    <property type="entry name" value="ATP-DEPENDENT CLP PROTEASE ATP-BINDING SUBUNIT CLPX-LIKE, MITOCHONDRIAL"/>
    <property type="match status" value="1"/>
</dbReference>
<dbReference type="PANTHER" id="PTHR48102">
    <property type="entry name" value="ATP-DEPENDENT CLP PROTEASE ATP-BINDING SUBUNIT CLPX-LIKE, MITOCHONDRIAL-RELATED"/>
    <property type="match status" value="1"/>
</dbReference>
<dbReference type="Pfam" id="PF07724">
    <property type="entry name" value="AAA_2"/>
    <property type="match status" value="1"/>
</dbReference>
<dbReference type="Pfam" id="PF10431">
    <property type="entry name" value="ClpB_D2-small"/>
    <property type="match status" value="1"/>
</dbReference>
<dbReference type="Pfam" id="PF06689">
    <property type="entry name" value="zf-C4_ClpX"/>
    <property type="match status" value="1"/>
</dbReference>
<dbReference type="SMART" id="SM00382">
    <property type="entry name" value="AAA"/>
    <property type="match status" value="1"/>
</dbReference>
<dbReference type="SMART" id="SM01086">
    <property type="entry name" value="ClpB_D2-small"/>
    <property type="match status" value="1"/>
</dbReference>
<dbReference type="SMART" id="SM00994">
    <property type="entry name" value="zf-C4_ClpX"/>
    <property type="match status" value="1"/>
</dbReference>
<dbReference type="SUPFAM" id="SSF57716">
    <property type="entry name" value="Glucocorticoid receptor-like (DNA-binding domain)"/>
    <property type="match status" value="1"/>
</dbReference>
<dbReference type="SUPFAM" id="SSF52540">
    <property type="entry name" value="P-loop containing nucleoside triphosphate hydrolases"/>
    <property type="match status" value="1"/>
</dbReference>
<dbReference type="PROSITE" id="PS51902">
    <property type="entry name" value="CLPX_ZB"/>
    <property type="match status" value="1"/>
</dbReference>